<reference key="1">
    <citation type="journal article" date="2003" name="Nature">
        <title>The genome of a motile marine Synechococcus.</title>
        <authorList>
            <person name="Palenik B."/>
            <person name="Brahamsha B."/>
            <person name="Larimer F.W."/>
            <person name="Land M.L."/>
            <person name="Hauser L."/>
            <person name="Chain P."/>
            <person name="Lamerdin J.E."/>
            <person name="Regala W."/>
            <person name="Allen E.E."/>
            <person name="McCarren J."/>
            <person name="Paulsen I.T."/>
            <person name="Dufresne A."/>
            <person name="Partensky F."/>
            <person name="Webb E.A."/>
            <person name="Waterbury J."/>
        </authorList>
    </citation>
    <scope>NUCLEOTIDE SEQUENCE [LARGE SCALE GENOMIC DNA]</scope>
    <source>
        <strain>WH8102</strain>
    </source>
</reference>
<name>PROB_PARMW</name>
<feature type="chain" id="PRO_0000109744" description="Glutamate 5-kinase">
    <location>
        <begin position="1"/>
        <end position="357"/>
    </location>
</feature>
<feature type="domain" description="PUA" evidence="1">
    <location>
        <begin position="270"/>
        <end position="347"/>
    </location>
</feature>
<feature type="binding site" evidence="1">
    <location>
        <position position="7"/>
    </location>
    <ligand>
        <name>ATP</name>
        <dbReference type="ChEBI" id="CHEBI:30616"/>
    </ligand>
</feature>
<feature type="binding site" evidence="1">
    <location>
        <position position="43"/>
    </location>
    <ligand>
        <name>substrate</name>
    </ligand>
</feature>
<feature type="binding site" evidence="1">
    <location>
        <position position="130"/>
    </location>
    <ligand>
        <name>substrate</name>
    </ligand>
</feature>
<feature type="binding site" evidence="1">
    <location>
        <position position="142"/>
    </location>
    <ligand>
        <name>substrate</name>
    </ligand>
</feature>
<feature type="binding site" evidence="1">
    <location>
        <begin position="162"/>
        <end position="163"/>
    </location>
    <ligand>
        <name>ATP</name>
        <dbReference type="ChEBI" id="CHEBI:30616"/>
    </ligand>
</feature>
<accession>Q7U842</accession>
<organism>
    <name type="scientific">Parasynechococcus marenigrum (strain WH8102)</name>
    <dbReference type="NCBI Taxonomy" id="84588"/>
    <lineage>
        <taxon>Bacteria</taxon>
        <taxon>Bacillati</taxon>
        <taxon>Cyanobacteriota</taxon>
        <taxon>Cyanophyceae</taxon>
        <taxon>Synechococcales</taxon>
        <taxon>Prochlorococcaceae</taxon>
        <taxon>Parasynechococcus</taxon>
        <taxon>Parasynechococcus marenigrum</taxon>
    </lineage>
</organism>
<protein>
    <recommendedName>
        <fullName evidence="1">Glutamate 5-kinase</fullName>
        <ecNumber evidence="1">2.7.2.11</ecNumber>
    </recommendedName>
    <alternativeName>
        <fullName evidence="1">Gamma-glutamyl kinase</fullName>
        <shortName evidence="1">GK</shortName>
    </alternativeName>
</protein>
<dbReference type="EC" id="2.7.2.11" evidence="1"/>
<dbReference type="EMBL" id="BX569691">
    <property type="protein sequence ID" value="CAE07297.1"/>
    <property type="molecule type" value="Genomic_DNA"/>
</dbReference>
<dbReference type="RefSeq" id="WP_011127647.1">
    <property type="nucleotide sequence ID" value="NC_005070.1"/>
</dbReference>
<dbReference type="SMR" id="Q7U842"/>
<dbReference type="STRING" id="84588.SYNW0782"/>
<dbReference type="KEGG" id="syw:SYNW0782"/>
<dbReference type="eggNOG" id="COG0263">
    <property type="taxonomic scope" value="Bacteria"/>
</dbReference>
<dbReference type="HOGENOM" id="CLU_025400_2_0_3"/>
<dbReference type="UniPathway" id="UPA00098">
    <property type="reaction ID" value="UER00359"/>
</dbReference>
<dbReference type="Proteomes" id="UP000001422">
    <property type="component" value="Chromosome"/>
</dbReference>
<dbReference type="GO" id="GO:0005829">
    <property type="term" value="C:cytosol"/>
    <property type="evidence" value="ECO:0007669"/>
    <property type="project" value="TreeGrafter"/>
</dbReference>
<dbReference type="GO" id="GO:0005524">
    <property type="term" value="F:ATP binding"/>
    <property type="evidence" value="ECO:0007669"/>
    <property type="project" value="UniProtKB-KW"/>
</dbReference>
<dbReference type="GO" id="GO:0004349">
    <property type="term" value="F:glutamate 5-kinase activity"/>
    <property type="evidence" value="ECO:0007669"/>
    <property type="project" value="UniProtKB-UniRule"/>
</dbReference>
<dbReference type="GO" id="GO:0003723">
    <property type="term" value="F:RNA binding"/>
    <property type="evidence" value="ECO:0007669"/>
    <property type="project" value="InterPro"/>
</dbReference>
<dbReference type="GO" id="GO:0055129">
    <property type="term" value="P:L-proline biosynthetic process"/>
    <property type="evidence" value="ECO:0007669"/>
    <property type="project" value="UniProtKB-UniRule"/>
</dbReference>
<dbReference type="CDD" id="cd04242">
    <property type="entry name" value="AAK_G5K_ProB"/>
    <property type="match status" value="1"/>
</dbReference>
<dbReference type="CDD" id="cd21157">
    <property type="entry name" value="PUA_G5K"/>
    <property type="match status" value="1"/>
</dbReference>
<dbReference type="FunFam" id="3.40.1160.10:FF:000018">
    <property type="entry name" value="Glutamate 5-kinase"/>
    <property type="match status" value="1"/>
</dbReference>
<dbReference type="Gene3D" id="3.40.1160.10">
    <property type="entry name" value="Acetylglutamate kinase-like"/>
    <property type="match status" value="1"/>
</dbReference>
<dbReference type="Gene3D" id="2.30.130.10">
    <property type="entry name" value="PUA domain"/>
    <property type="match status" value="1"/>
</dbReference>
<dbReference type="HAMAP" id="MF_00456">
    <property type="entry name" value="ProB"/>
    <property type="match status" value="1"/>
</dbReference>
<dbReference type="InterPro" id="IPR036393">
    <property type="entry name" value="AceGlu_kinase-like_sf"/>
</dbReference>
<dbReference type="InterPro" id="IPR001048">
    <property type="entry name" value="Asp/Glu/Uridylate_kinase"/>
</dbReference>
<dbReference type="InterPro" id="IPR041739">
    <property type="entry name" value="G5K_ProB"/>
</dbReference>
<dbReference type="InterPro" id="IPR001057">
    <property type="entry name" value="Glu/AcGlu_kinase"/>
</dbReference>
<dbReference type="InterPro" id="IPR011529">
    <property type="entry name" value="Glu_5kinase"/>
</dbReference>
<dbReference type="InterPro" id="IPR005715">
    <property type="entry name" value="Glu_5kinase/COase_Synthase"/>
</dbReference>
<dbReference type="InterPro" id="IPR019797">
    <property type="entry name" value="Glutamate_5-kinase_CS"/>
</dbReference>
<dbReference type="InterPro" id="IPR002478">
    <property type="entry name" value="PUA"/>
</dbReference>
<dbReference type="InterPro" id="IPR015947">
    <property type="entry name" value="PUA-like_sf"/>
</dbReference>
<dbReference type="InterPro" id="IPR036974">
    <property type="entry name" value="PUA_sf"/>
</dbReference>
<dbReference type="NCBIfam" id="TIGR01027">
    <property type="entry name" value="proB"/>
    <property type="match status" value="1"/>
</dbReference>
<dbReference type="PANTHER" id="PTHR43654">
    <property type="entry name" value="GLUTAMATE 5-KINASE"/>
    <property type="match status" value="1"/>
</dbReference>
<dbReference type="PANTHER" id="PTHR43654:SF3">
    <property type="entry name" value="GLUTAMATE 5-KINASE"/>
    <property type="match status" value="1"/>
</dbReference>
<dbReference type="Pfam" id="PF00696">
    <property type="entry name" value="AA_kinase"/>
    <property type="match status" value="1"/>
</dbReference>
<dbReference type="Pfam" id="PF01472">
    <property type="entry name" value="PUA"/>
    <property type="match status" value="1"/>
</dbReference>
<dbReference type="PIRSF" id="PIRSF000729">
    <property type="entry name" value="GK"/>
    <property type="match status" value="1"/>
</dbReference>
<dbReference type="PRINTS" id="PR00474">
    <property type="entry name" value="GLU5KINASE"/>
</dbReference>
<dbReference type="SMART" id="SM00359">
    <property type="entry name" value="PUA"/>
    <property type="match status" value="1"/>
</dbReference>
<dbReference type="SUPFAM" id="SSF53633">
    <property type="entry name" value="Carbamate kinase-like"/>
    <property type="match status" value="1"/>
</dbReference>
<dbReference type="SUPFAM" id="SSF88697">
    <property type="entry name" value="PUA domain-like"/>
    <property type="match status" value="1"/>
</dbReference>
<dbReference type="PROSITE" id="PS00902">
    <property type="entry name" value="GLUTAMATE_5_KINASE"/>
    <property type="match status" value="1"/>
</dbReference>
<dbReference type="PROSITE" id="PS50890">
    <property type="entry name" value="PUA"/>
    <property type="match status" value="1"/>
</dbReference>
<proteinExistence type="inferred from homology"/>
<keyword id="KW-0028">Amino-acid biosynthesis</keyword>
<keyword id="KW-0067">ATP-binding</keyword>
<keyword id="KW-0963">Cytoplasm</keyword>
<keyword id="KW-0418">Kinase</keyword>
<keyword id="KW-0547">Nucleotide-binding</keyword>
<keyword id="KW-0641">Proline biosynthesis</keyword>
<keyword id="KW-0808">Transferase</keyword>
<gene>
    <name evidence="1" type="primary">proB</name>
    <name type="ordered locus">SYNW0782</name>
</gene>
<sequence length="357" mass="37355">MTLWVVKLGTSLLRGDTAATIAGFAAGIAAAFARGDRVVLVSSGAVGLGCQRLQLPQRPETVVALQAAAATGQGQLMALYERALANHGIAVAQILVTRSDLADRRRYQNASGTLQQLLQWGVLPVVNENDAISPAELRFGDNDTLSALVAAAVGADQLILLTDVDRLYSADPRLVVDARPISDVHHPRELDALEAVAGDGGRWGRGGMTTKLAAARIATASGITVHLADGRDPRRLDALLQGERGGTVFHPHPEPLGNRRSWLAHALQPQGELTLDAGACDALHQRGSSLLMVGITAVKGVFGANQPVRLQGPDGRELGRGLCQLSSAAVQRALDAAPAAGPSPVVVHRDALVLHSR</sequence>
<comment type="function">
    <text evidence="1">Catalyzes the transfer of a phosphate group to glutamate to form L-glutamate 5-phosphate.</text>
</comment>
<comment type="catalytic activity">
    <reaction evidence="1">
        <text>L-glutamate + ATP = L-glutamyl 5-phosphate + ADP</text>
        <dbReference type="Rhea" id="RHEA:14877"/>
        <dbReference type="ChEBI" id="CHEBI:29985"/>
        <dbReference type="ChEBI" id="CHEBI:30616"/>
        <dbReference type="ChEBI" id="CHEBI:58274"/>
        <dbReference type="ChEBI" id="CHEBI:456216"/>
        <dbReference type="EC" id="2.7.2.11"/>
    </reaction>
</comment>
<comment type="pathway">
    <text evidence="1">Amino-acid biosynthesis; L-proline biosynthesis; L-glutamate 5-semialdehyde from L-glutamate: step 1/2.</text>
</comment>
<comment type="subcellular location">
    <subcellularLocation>
        <location evidence="1">Cytoplasm</location>
    </subcellularLocation>
</comment>
<comment type="similarity">
    <text evidence="1">Belongs to the glutamate 5-kinase family.</text>
</comment>
<evidence type="ECO:0000255" key="1">
    <source>
        <dbReference type="HAMAP-Rule" id="MF_00456"/>
    </source>
</evidence>